<keyword id="KW-0997">Cell inner membrane</keyword>
<keyword id="KW-1003">Cell membrane</keyword>
<keyword id="KW-0378">Hydrolase</keyword>
<keyword id="KW-0472">Membrane</keyword>
<keyword id="KW-0479">Metal-binding</keyword>
<keyword id="KW-0482">Metalloprotease</keyword>
<keyword id="KW-0645">Protease</keyword>
<keyword id="KW-0812">Transmembrane</keyword>
<keyword id="KW-1133">Transmembrane helix</keyword>
<keyword id="KW-0862">Zinc</keyword>
<organism>
    <name type="scientific">Mannheimia succiniciproducens (strain KCTC 0769BP / MBEL55E)</name>
    <dbReference type="NCBI Taxonomy" id="221988"/>
    <lineage>
        <taxon>Bacteria</taxon>
        <taxon>Pseudomonadati</taxon>
        <taxon>Pseudomonadota</taxon>
        <taxon>Gammaproteobacteria</taxon>
        <taxon>Pasteurellales</taxon>
        <taxon>Pasteurellaceae</taxon>
        <taxon>Basfia</taxon>
    </lineage>
</organism>
<dbReference type="EC" id="3.4.24.-" evidence="1"/>
<dbReference type="EMBL" id="AE016827">
    <property type="protein sequence ID" value="AAU37741.1"/>
    <property type="molecule type" value="Genomic_DNA"/>
</dbReference>
<dbReference type="RefSeq" id="WP_011200309.1">
    <property type="nucleotide sequence ID" value="NC_006300.1"/>
</dbReference>
<dbReference type="SMR" id="Q65TG9"/>
<dbReference type="STRING" id="221988.MS1134"/>
<dbReference type="MEROPS" id="M48.002"/>
<dbReference type="KEGG" id="msu:MS1134"/>
<dbReference type="eggNOG" id="COG0501">
    <property type="taxonomic scope" value="Bacteria"/>
</dbReference>
<dbReference type="HOGENOM" id="CLU_042266_1_0_6"/>
<dbReference type="OrthoDB" id="15218at2"/>
<dbReference type="Proteomes" id="UP000000607">
    <property type="component" value="Chromosome"/>
</dbReference>
<dbReference type="GO" id="GO:0005886">
    <property type="term" value="C:plasma membrane"/>
    <property type="evidence" value="ECO:0007669"/>
    <property type="project" value="UniProtKB-SubCell"/>
</dbReference>
<dbReference type="GO" id="GO:0004222">
    <property type="term" value="F:metalloendopeptidase activity"/>
    <property type="evidence" value="ECO:0007669"/>
    <property type="project" value="UniProtKB-UniRule"/>
</dbReference>
<dbReference type="GO" id="GO:0008270">
    <property type="term" value="F:zinc ion binding"/>
    <property type="evidence" value="ECO:0007669"/>
    <property type="project" value="UniProtKB-UniRule"/>
</dbReference>
<dbReference type="GO" id="GO:0006508">
    <property type="term" value="P:proteolysis"/>
    <property type="evidence" value="ECO:0007669"/>
    <property type="project" value="UniProtKB-KW"/>
</dbReference>
<dbReference type="CDD" id="cd07335">
    <property type="entry name" value="M48B_HtpX_like"/>
    <property type="match status" value="1"/>
</dbReference>
<dbReference type="Gene3D" id="3.30.2010.10">
    <property type="entry name" value="Metalloproteases ('zincins'), catalytic domain"/>
    <property type="match status" value="1"/>
</dbReference>
<dbReference type="HAMAP" id="MF_00188">
    <property type="entry name" value="Pept_M48_protease_HtpX"/>
    <property type="match status" value="1"/>
</dbReference>
<dbReference type="InterPro" id="IPR050083">
    <property type="entry name" value="HtpX_protease"/>
</dbReference>
<dbReference type="InterPro" id="IPR022919">
    <property type="entry name" value="Pept_M48_protease_HtpX"/>
</dbReference>
<dbReference type="InterPro" id="IPR001915">
    <property type="entry name" value="Peptidase_M48"/>
</dbReference>
<dbReference type="NCBIfam" id="NF003965">
    <property type="entry name" value="PRK05457.1"/>
    <property type="match status" value="1"/>
</dbReference>
<dbReference type="PANTHER" id="PTHR43221">
    <property type="entry name" value="PROTEASE HTPX"/>
    <property type="match status" value="1"/>
</dbReference>
<dbReference type="PANTHER" id="PTHR43221:SF1">
    <property type="entry name" value="PROTEASE HTPX"/>
    <property type="match status" value="1"/>
</dbReference>
<dbReference type="Pfam" id="PF01435">
    <property type="entry name" value="Peptidase_M48"/>
    <property type="match status" value="1"/>
</dbReference>
<reference key="1">
    <citation type="journal article" date="2004" name="Nat. Biotechnol.">
        <title>The genome sequence of the capnophilic rumen bacterium Mannheimia succiniciproducens.</title>
        <authorList>
            <person name="Hong S.H."/>
            <person name="Kim J.S."/>
            <person name="Lee S.Y."/>
            <person name="In Y.H."/>
            <person name="Choi S.S."/>
            <person name="Rih J.-K."/>
            <person name="Kim C.H."/>
            <person name="Jeong H."/>
            <person name="Hur C.G."/>
            <person name="Kim J.J."/>
        </authorList>
    </citation>
    <scope>NUCLEOTIDE SEQUENCE [LARGE SCALE GENOMIC DNA]</scope>
    <source>
        <strain>KCTC 0769BP / MBEL55E</strain>
    </source>
</reference>
<proteinExistence type="inferred from homology"/>
<accession>Q65TG9</accession>
<evidence type="ECO:0000255" key="1">
    <source>
        <dbReference type="HAMAP-Rule" id="MF_00188"/>
    </source>
</evidence>
<comment type="cofactor">
    <cofactor evidence="1">
        <name>Zn(2+)</name>
        <dbReference type="ChEBI" id="CHEBI:29105"/>
    </cofactor>
    <text evidence="1">Binds 1 zinc ion per subunit.</text>
</comment>
<comment type="subcellular location">
    <subcellularLocation>
        <location evidence="1">Cell inner membrane</location>
        <topology evidence="1">Multi-pass membrane protein</topology>
    </subcellularLocation>
</comment>
<comment type="similarity">
    <text evidence="1">Belongs to the peptidase M48B family.</text>
</comment>
<protein>
    <recommendedName>
        <fullName evidence="1">Protease HtpX</fullName>
        <ecNumber evidence="1">3.4.24.-</ecNumber>
    </recommendedName>
    <alternativeName>
        <fullName evidence="1">Heat shock protein HtpX</fullName>
    </alternativeName>
</protein>
<sequence length="284" mass="30890">MMRILLFLATNAAVLIVFNIILSLTGIRGQDAMGLLIMAALFGFTGSIISLLMSKRSALAATGAEVIEQPRNDTERWLLQTVHSQAEKAGLPKPDVAIYHSNDVNAFATGASKNNSLVAVSTALLNNMTRDEAEGVLAHEISHIKNGDMVTMTLLQGVLNTFVIFAARMIARMVANNRSSEESNSGIYFLVAMVLEVVFGFLASMIAMWFSRFREFRADAGSAELAGKQKMIAALKRLQAIHEPQEMDGKLAAFAINGKRGGFTSLFLSHPPLEKRIEALETSK</sequence>
<gene>
    <name evidence="1" type="primary">htpX</name>
    <name type="ordered locus">MS1134</name>
</gene>
<name>HTPX_MANSM</name>
<feature type="chain" id="PRO_1000020885" description="Protease HtpX">
    <location>
        <begin position="1"/>
        <end position="284"/>
    </location>
</feature>
<feature type="transmembrane region" description="Helical" evidence="1">
    <location>
        <begin position="4"/>
        <end position="24"/>
    </location>
</feature>
<feature type="transmembrane region" description="Helical" evidence="1">
    <location>
        <begin position="33"/>
        <end position="53"/>
    </location>
</feature>
<feature type="transmembrane region" description="Helical" evidence="1">
    <location>
        <begin position="147"/>
        <end position="167"/>
    </location>
</feature>
<feature type="transmembrane region" description="Helical" evidence="1">
    <location>
        <begin position="187"/>
        <end position="207"/>
    </location>
</feature>
<feature type="active site" evidence="1">
    <location>
        <position position="140"/>
    </location>
</feature>
<feature type="binding site" evidence="1">
    <location>
        <position position="139"/>
    </location>
    <ligand>
        <name>Zn(2+)</name>
        <dbReference type="ChEBI" id="CHEBI:29105"/>
        <note>catalytic</note>
    </ligand>
</feature>
<feature type="binding site" evidence="1">
    <location>
        <position position="143"/>
    </location>
    <ligand>
        <name>Zn(2+)</name>
        <dbReference type="ChEBI" id="CHEBI:29105"/>
        <note>catalytic</note>
    </ligand>
</feature>
<feature type="binding site" evidence="1">
    <location>
        <position position="215"/>
    </location>
    <ligand>
        <name>Zn(2+)</name>
        <dbReference type="ChEBI" id="CHEBI:29105"/>
        <note>catalytic</note>
    </ligand>
</feature>